<sequence>MLSSTRYYASYRATLTKQLMFLTKADFTNDDEKWLNAFGNLLRQWFQIEDWKGNHKKLLDDLKKRDYL</sequence>
<gene>
    <name type="primary">C</name>
</gene>
<comment type="function">
    <text>C protein is one of the proteins involved in the production and packaging of viral single-stranded DNA.</text>
</comment>
<protein>
    <recommendedName>
        <fullName>C protein</fullName>
    </recommendedName>
</protein>
<proteinExistence type="predicted"/>
<reference key="1">
    <citation type="journal article" date="1992" name="Biochim. Biophys. Acta">
        <title>Nucleotide sequence of the genome of the bacteriophage alpha 3: interrelationship of the genome structure and the gene products with those of the phages, phi X174, G4 and phi K.</title>
        <authorList>
            <person name="Kodaira K."/>
            <person name="Nakano K."/>
            <person name="Okada S."/>
            <person name="Taketo A."/>
        </authorList>
    </citation>
    <scope>NUCLEOTIDE SEQUENCE [GENOMIC DNA]</scope>
</reference>
<keyword id="KW-1185">Reference proteome</keyword>
<dbReference type="EMBL" id="X60322">
    <property type="protein sequence ID" value="CAA42877.1"/>
    <property type="molecule type" value="Genomic_DNA"/>
</dbReference>
<dbReference type="PIR" id="S22327">
    <property type="entry name" value="S22327"/>
</dbReference>
<dbReference type="RefSeq" id="NP_039593.1">
    <property type="nucleotide sequence ID" value="NC_001330.1"/>
</dbReference>
<dbReference type="GeneID" id="1260693"/>
<dbReference type="KEGG" id="vg:1260693"/>
<dbReference type="OrthoDB" id="24187at10239"/>
<dbReference type="Proteomes" id="UP000002137">
    <property type="component" value="Genome"/>
</dbReference>
<dbReference type="GO" id="GO:0019073">
    <property type="term" value="P:viral DNA genome packaging"/>
    <property type="evidence" value="ECO:0007669"/>
    <property type="project" value="InterPro"/>
</dbReference>
<dbReference type="InterPro" id="IPR016407">
    <property type="entry name" value="C-protein"/>
</dbReference>
<dbReference type="Pfam" id="PF12025">
    <property type="entry name" value="Phage_C"/>
    <property type="match status" value="1"/>
</dbReference>
<dbReference type="PIRSF" id="PIRSF004155">
    <property type="entry name" value="Phage_C"/>
    <property type="match status" value="1"/>
</dbReference>
<feature type="chain" id="PRO_0000164872" description="C protein">
    <location>
        <begin position="1"/>
        <end position="68"/>
    </location>
</feature>
<name>VGC_BPAL3</name>
<accession>P31279</accession>
<organism>
    <name type="scientific">Escherichia phage alpha3</name>
    <name type="common">Bacteriophage alpha-3</name>
    <dbReference type="NCBI Taxonomy" id="10849"/>
    <lineage>
        <taxon>Viruses</taxon>
        <taxon>Monodnaviria</taxon>
        <taxon>Sangervirae</taxon>
        <taxon>Phixviricota</taxon>
        <taxon>Malgrandaviricetes</taxon>
        <taxon>Petitvirales</taxon>
        <taxon>Microviridae</taxon>
        <taxon>Bullavirinae</taxon>
        <taxon>Alphatrevirus</taxon>
        <taxon>Alphatrevirus alpha3</taxon>
    </lineage>
</organism>
<organismHost>
    <name type="scientific">Escherichia coli</name>
    <dbReference type="NCBI Taxonomy" id="562"/>
</organismHost>